<feature type="chain" id="PRO_0000240896" description="Cysteine--tRNA ligase 1">
    <location>
        <begin position="1"/>
        <end position="470"/>
    </location>
</feature>
<feature type="short sequence motif" description="'HIGH' region">
    <location>
        <begin position="31"/>
        <end position="41"/>
    </location>
</feature>
<feature type="short sequence motif" description="'KMSKS' region">
    <location>
        <begin position="279"/>
        <end position="283"/>
    </location>
</feature>
<feature type="binding site" evidence="1">
    <location>
        <position position="29"/>
    </location>
    <ligand>
        <name>Zn(2+)</name>
        <dbReference type="ChEBI" id="CHEBI:29105"/>
    </ligand>
</feature>
<feature type="binding site" evidence="1">
    <location>
        <position position="221"/>
    </location>
    <ligand>
        <name>Zn(2+)</name>
        <dbReference type="ChEBI" id="CHEBI:29105"/>
    </ligand>
</feature>
<feature type="binding site" evidence="1">
    <location>
        <position position="246"/>
    </location>
    <ligand>
        <name>Zn(2+)</name>
        <dbReference type="ChEBI" id="CHEBI:29105"/>
    </ligand>
</feature>
<feature type="binding site" evidence="1">
    <location>
        <position position="250"/>
    </location>
    <ligand>
        <name>Zn(2+)</name>
        <dbReference type="ChEBI" id="CHEBI:29105"/>
    </ligand>
</feature>
<feature type="binding site" evidence="1">
    <location>
        <position position="282"/>
    </location>
    <ligand>
        <name>ATP</name>
        <dbReference type="ChEBI" id="CHEBI:30616"/>
    </ligand>
</feature>
<sequence>MPLALYDTWSRTVRPFTPIRAGQVGMYGCGPTVYDDAHIGNLRTYVFEDLLRRVLERNGYAVRHVVNITDVGHLTSDADEGEDKMEKGSRRTGESAWAIARRYTEAFVRDWHALNLLEPTIWCRATDHIAEQIAFIETLDRAGYVYRTDDGLYFDTSRQDDYGYLARLDRAGLQAGKRVALGGKRSITDFALWKFSPADVQRQMEWDSPWGRGFPGWHIECSAMSAKYLGTLFDIHCGGEDHIAVHHSNEIAQTRAAHGTQLANYWMHGHFLTLDVHTKMSKSSGDFVRLQTLQRRGVDPLAYRYLCLTAHYRSKLHFTWESLDAAQTALNRLRHLYIGWPDGGRVDADFAARFDAEVNEDLNLPRALAVLWDLVRSNLPPATLKATVDSFDMVLGLGLREWRPVAVDVPEHVRALLGERARARAEKDWAQADRIREALSAEGWRVEDTPEGQRLFGMAMGASEPDVPPQ</sequence>
<proteinExistence type="inferred from homology"/>
<name>SYC1_BURL3</name>
<reference key="1">
    <citation type="submission" date="2005-10" db="EMBL/GenBank/DDBJ databases">
        <title>Complete sequence of chromosome 2 of Burkholderia sp. 383.</title>
        <authorList>
            <consortium name="US DOE Joint Genome Institute"/>
            <person name="Copeland A."/>
            <person name="Lucas S."/>
            <person name="Lapidus A."/>
            <person name="Barry K."/>
            <person name="Detter J.C."/>
            <person name="Glavina T."/>
            <person name="Hammon N."/>
            <person name="Israni S."/>
            <person name="Pitluck S."/>
            <person name="Chain P."/>
            <person name="Malfatti S."/>
            <person name="Shin M."/>
            <person name="Vergez L."/>
            <person name="Schmutz J."/>
            <person name="Larimer F."/>
            <person name="Land M."/>
            <person name="Kyrpides N."/>
            <person name="Lykidis A."/>
            <person name="Richardson P."/>
        </authorList>
    </citation>
    <scope>NUCLEOTIDE SEQUENCE [LARGE SCALE GENOMIC DNA]</scope>
    <source>
        <strain>ATCC 17760 / DSM 23089 / LMG 22485 / NCIMB 9086 / R18194 / 383</strain>
    </source>
</reference>
<organism>
    <name type="scientific">Burkholderia lata (strain ATCC 17760 / DSM 23089 / LMG 22485 / NCIMB 9086 / R18194 / 383)</name>
    <dbReference type="NCBI Taxonomy" id="482957"/>
    <lineage>
        <taxon>Bacteria</taxon>
        <taxon>Pseudomonadati</taxon>
        <taxon>Pseudomonadota</taxon>
        <taxon>Betaproteobacteria</taxon>
        <taxon>Burkholderiales</taxon>
        <taxon>Burkholderiaceae</taxon>
        <taxon>Burkholderia</taxon>
        <taxon>Burkholderia cepacia complex</taxon>
    </lineage>
</organism>
<gene>
    <name evidence="1" type="primary">cysS1</name>
    <name type="ordered locus">Bcep18194_B0590</name>
</gene>
<accession>Q39A07</accession>
<comment type="catalytic activity">
    <reaction evidence="1">
        <text>tRNA(Cys) + L-cysteine + ATP = L-cysteinyl-tRNA(Cys) + AMP + diphosphate</text>
        <dbReference type="Rhea" id="RHEA:17773"/>
        <dbReference type="Rhea" id="RHEA-COMP:9661"/>
        <dbReference type="Rhea" id="RHEA-COMP:9679"/>
        <dbReference type="ChEBI" id="CHEBI:30616"/>
        <dbReference type="ChEBI" id="CHEBI:33019"/>
        <dbReference type="ChEBI" id="CHEBI:35235"/>
        <dbReference type="ChEBI" id="CHEBI:78442"/>
        <dbReference type="ChEBI" id="CHEBI:78517"/>
        <dbReference type="ChEBI" id="CHEBI:456215"/>
        <dbReference type="EC" id="6.1.1.16"/>
    </reaction>
</comment>
<comment type="cofactor">
    <cofactor evidence="1">
        <name>Zn(2+)</name>
        <dbReference type="ChEBI" id="CHEBI:29105"/>
    </cofactor>
    <text evidence="1">Binds 1 zinc ion per subunit.</text>
</comment>
<comment type="subunit">
    <text evidence="1">Monomer.</text>
</comment>
<comment type="subcellular location">
    <subcellularLocation>
        <location evidence="1">Cytoplasm</location>
    </subcellularLocation>
</comment>
<comment type="similarity">
    <text evidence="1">Belongs to the class-I aminoacyl-tRNA synthetase family.</text>
</comment>
<protein>
    <recommendedName>
        <fullName evidence="1">Cysteine--tRNA ligase 1</fullName>
        <ecNumber evidence="1">6.1.1.16</ecNumber>
    </recommendedName>
    <alternativeName>
        <fullName evidence="1">Cysteinyl-tRNA synthetase 1</fullName>
        <shortName evidence="1">CysRS 1</shortName>
    </alternativeName>
</protein>
<keyword id="KW-0030">Aminoacyl-tRNA synthetase</keyword>
<keyword id="KW-0067">ATP-binding</keyword>
<keyword id="KW-0963">Cytoplasm</keyword>
<keyword id="KW-0436">Ligase</keyword>
<keyword id="KW-0479">Metal-binding</keyword>
<keyword id="KW-0547">Nucleotide-binding</keyword>
<keyword id="KW-0648">Protein biosynthesis</keyword>
<keyword id="KW-0862">Zinc</keyword>
<evidence type="ECO:0000255" key="1">
    <source>
        <dbReference type="HAMAP-Rule" id="MF_00041"/>
    </source>
</evidence>
<dbReference type="EC" id="6.1.1.16" evidence="1"/>
<dbReference type="EMBL" id="CP000152">
    <property type="protein sequence ID" value="ABB10704.1"/>
    <property type="molecule type" value="Genomic_DNA"/>
</dbReference>
<dbReference type="RefSeq" id="WP_011354198.1">
    <property type="nucleotide sequence ID" value="NC_007511.1"/>
</dbReference>
<dbReference type="SMR" id="Q39A07"/>
<dbReference type="GeneID" id="45096964"/>
<dbReference type="KEGG" id="bur:Bcep18194_B0590"/>
<dbReference type="PATRIC" id="fig|482957.22.peg.4200"/>
<dbReference type="HOGENOM" id="CLU_013528_0_1_4"/>
<dbReference type="Proteomes" id="UP000002705">
    <property type="component" value="Chromosome 2"/>
</dbReference>
<dbReference type="GO" id="GO:0005829">
    <property type="term" value="C:cytosol"/>
    <property type="evidence" value="ECO:0007669"/>
    <property type="project" value="TreeGrafter"/>
</dbReference>
<dbReference type="GO" id="GO:0005524">
    <property type="term" value="F:ATP binding"/>
    <property type="evidence" value="ECO:0007669"/>
    <property type="project" value="UniProtKB-UniRule"/>
</dbReference>
<dbReference type="GO" id="GO:0004817">
    <property type="term" value="F:cysteine-tRNA ligase activity"/>
    <property type="evidence" value="ECO:0007669"/>
    <property type="project" value="UniProtKB-UniRule"/>
</dbReference>
<dbReference type="GO" id="GO:0008270">
    <property type="term" value="F:zinc ion binding"/>
    <property type="evidence" value="ECO:0007669"/>
    <property type="project" value="UniProtKB-UniRule"/>
</dbReference>
<dbReference type="GO" id="GO:0006423">
    <property type="term" value="P:cysteinyl-tRNA aminoacylation"/>
    <property type="evidence" value="ECO:0007669"/>
    <property type="project" value="UniProtKB-UniRule"/>
</dbReference>
<dbReference type="CDD" id="cd00672">
    <property type="entry name" value="CysRS_core"/>
    <property type="match status" value="1"/>
</dbReference>
<dbReference type="Gene3D" id="1.20.120.640">
    <property type="entry name" value="Anticodon-binding domain of a subclass of class I aminoacyl-tRNA synthetases"/>
    <property type="match status" value="1"/>
</dbReference>
<dbReference type="Gene3D" id="3.40.50.620">
    <property type="entry name" value="HUPs"/>
    <property type="match status" value="1"/>
</dbReference>
<dbReference type="HAMAP" id="MF_00041">
    <property type="entry name" value="Cys_tRNA_synth"/>
    <property type="match status" value="1"/>
</dbReference>
<dbReference type="InterPro" id="IPR015803">
    <property type="entry name" value="Cys-tRNA-ligase"/>
</dbReference>
<dbReference type="InterPro" id="IPR024909">
    <property type="entry name" value="Cys-tRNA/MSH_ligase"/>
</dbReference>
<dbReference type="InterPro" id="IPR056411">
    <property type="entry name" value="CysS_C"/>
</dbReference>
<dbReference type="InterPro" id="IPR014729">
    <property type="entry name" value="Rossmann-like_a/b/a_fold"/>
</dbReference>
<dbReference type="InterPro" id="IPR032678">
    <property type="entry name" value="tRNA-synt_1_cat_dom"/>
</dbReference>
<dbReference type="InterPro" id="IPR009080">
    <property type="entry name" value="tRNAsynth_Ia_anticodon-bd"/>
</dbReference>
<dbReference type="NCBIfam" id="TIGR00435">
    <property type="entry name" value="cysS"/>
    <property type="match status" value="1"/>
</dbReference>
<dbReference type="PANTHER" id="PTHR10890:SF3">
    <property type="entry name" value="CYSTEINE--TRNA LIGASE, CYTOPLASMIC"/>
    <property type="match status" value="1"/>
</dbReference>
<dbReference type="PANTHER" id="PTHR10890">
    <property type="entry name" value="CYSTEINYL-TRNA SYNTHETASE"/>
    <property type="match status" value="1"/>
</dbReference>
<dbReference type="Pfam" id="PF23493">
    <property type="entry name" value="CysS_C"/>
    <property type="match status" value="1"/>
</dbReference>
<dbReference type="Pfam" id="PF01406">
    <property type="entry name" value="tRNA-synt_1e"/>
    <property type="match status" value="1"/>
</dbReference>
<dbReference type="PRINTS" id="PR00983">
    <property type="entry name" value="TRNASYNTHCYS"/>
</dbReference>
<dbReference type="SUPFAM" id="SSF47323">
    <property type="entry name" value="Anticodon-binding domain of a subclass of class I aminoacyl-tRNA synthetases"/>
    <property type="match status" value="1"/>
</dbReference>
<dbReference type="SUPFAM" id="SSF52374">
    <property type="entry name" value="Nucleotidylyl transferase"/>
    <property type="match status" value="1"/>
</dbReference>